<keyword id="KW-0002">3D-structure</keyword>
<keyword id="KW-0007">Acetylation</keyword>
<keyword id="KW-0010">Activator</keyword>
<keyword id="KW-0053">Apoptosis</keyword>
<keyword id="KW-0158">Chromosome</keyword>
<keyword id="KW-0963">Cytoplasm</keyword>
<keyword id="KW-0206">Cytoskeleton</keyword>
<keyword id="KW-0903">Direct protein sequencing</keyword>
<keyword id="KW-0227">DNA damage</keyword>
<keyword id="KW-0243">Dynein</keyword>
<keyword id="KW-1017">Isopeptide bond</keyword>
<keyword id="KW-0493">Microtubule</keyword>
<keyword id="KW-0496">Mitochondrion</keyword>
<keyword id="KW-0505">Motor protein</keyword>
<keyword id="KW-0539">Nucleus</keyword>
<keyword id="KW-0597">Phosphoprotein</keyword>
<keyword id="KW-1185">Reference proteome</keyword>
<keyword id="KW-0804">Transcription</keyword>
<keyword id="KW-0805">Transcription regulation</keyword>
<keyword id="KW-0813">Transport</keyword>
<keyword id="KW-0832">Ubl conjugation</keyword>
<gene>
    <name type="primary">Dynll1</name>
    <name type="synonym">Dncl1</name>
    <name type="synonym">Dnclc1</name>
    <name type="synonym">Pin</name>
</gene>
<evidence type="ECO:0000250" key="1"/>
<evidence type="ECO:0000250" key="2">
    <source>
        <dbReference type="UniProtKB" id="P63167"/>
    </source>
</evidence>
<evidence type="ECO:0000250" key="3">
    <source>
        <dbReference type="UniProtKB" id="P63168"/>
    </source>
</evidence>
<evidence type="ECO:0000269" key="4">
    <source>
    </source>
</evidence>
<evidence type="ECO:0000269" key="5">
    <source>
    </source>
</evidence>
<evidence type="ECO:0000269" key="6">
    <source>
    </source>
</evidence>
<evidence type="ECO:0000269" key="7">
    <source>
    </source>
</evidence>
<evidence type="ECO:0000269" key="8">
    <source>
    </source>
</evidence>
<evidence type="ECO:0000269" key="9">
    <source>
    </source>
</evidence>
<evidence type="ECO:0000305" key="10"/>
<evidence type="ECO:0007829" key="11">
    <source>
        <dbReference type="PDB" id="1F3C"/>
    </source>
</evidence>
<protein>
    <recommendedName>
        <fullName>Dynein light chain 1, cytoplasmic</fullName>
    </recommendedName>
    <alternativeName>
        <fullName>8 kDa dynein light chain</fullName>
        <shortName>DLC8</shortName>
    </alternativeName>
    <alternativeName>
        <fullName>Dynein light chain LC8-type 1</fullName>
    </alternativeName>
    <alternativeName>
        <fullName>Protein inhibitor of neuronal nitric oxide synthase</fullName>
        <shortName>PIN</shortName>
    </alternativeName>
</protein>
<comment type="function">
    <text evidence="2 5 8 9">Acts as one of several non-catalytic accessory components of the cytoplasmic dynein 1 complex that are thought to be involved in linking dynein to cargos and to adapter proteins that regulate dynein function (PubMed:11746667, PubMed:8702622). Cytoplasmic dynein 1 acts as a motor for the intracellular retrograde motility of vesicles and organelles along microtubules (PubMed:11746667, PubMed:8702622). May play a role in changing or maintaining the spatial distribution of cytoskeletal structures (PubMed:11746667, PubMed:8702622). In addition to its role in cytoskeleton and transport, acts as a protein-protein adapter, which inhibits and/or sequesters target proteins (By similarity). Involved in the response to DNA damage by acting as a key regulator of DNA end resection: when phosphorylated at Ser-88, recruited to DNA double-strand breaks (DSBs) by TP53BP1 and acts by disrupting MRE11 dimerization, thereby inhibiting DNA end resection (By similarity). In a subset of DSBs, DYNLL1 remains unphosphorylated and promotes the recruitment of the Shieldin complex (By similarity). Binds and inhibits the catalytic activity of neuronal nitric oxide synthase/NOS1 (PubMed:8864115). Promotes transactivation functions of ESR1 and plays a role in the nuclear localization of ESR1 (By similarity). Regulates apoptotic activities of BCL2L11 by sequestering it to microtubules (By similarity). Upon apoptotic stimuli the BCL2L11-DYNLL1 complex dissociates from cytoplasmic dynein and translocates to mitochondria and sequesters BCL2 thus neutralizing its antiapoptotic activity (By similarity).</text>
</comment>
<comment type="subunit">
    <text evidence="2 3 5 6 7 8 9">Homodimer. Monomer; the monomeric form is incapable of binding to target proteins (By similarity). The cytoplasmic dynein 1 complex consists of two catalytic heavy chains (HCs) and a number of non-catalytic subunits presented by intermediate chains (ICs), light intermediate chains (LICs) and light chains (LCs); the composition seems to vary in respect to the IC, LIC and LC composition (PubMed:11746667, PubMed:8702622). The heavy chain homodimer serves as a scaffold for the probable homodimeric assembly of the respective non-catalytic subunits (PubMed:11746667, PubMed:8702622). The ICs and LICs bind directly to the HC dimer and the LCs assemble on the IC dimer (PubMed:11746667, PubMed:8702622). Interacts with TXNDC17. Interacts with WWC1 and ESR1. The WWC1-DYNLL1 interaction is mandatory for the recruitment and transactivation functions of ESR1 or DYNLL1 to the target chromatin. Interacts with BCL2L11 (PubMed:21478148). Interacts with BCL2; the interaction is greatly enhanced in the nucleus and in mitochondria upon induction of apoptosis. Interacts with PAK1; the interaction requires dimeric DYNLL1. Interacts with MYZAP. Part of an astrin (SPAG5)-kinastrin (SKAP) complex containing KNSTRN, SPAG5, PLK1, DYNLL1 and SGO2. Interacts with ATMIN; this interaction inhibits ATMIN transcriptional activity and hence may play a role in a feedback loop whereby DYNLL1 inhibits transactivation of its own promoter by ATMIN. Interacts with NEK9 (not phosphorylated at 'Ser-944') (By similarity). Interacts with BICD2 (By similarity). Interacts with BCAS1 (PubMed:16133941). Interacts with Basson/BSN. Interacts with HDAC6. Interacts with TPPP. Interacts with AMBRA1 (via TQT motifs); tethering AMBRA1 to the cytoskeleton. Interacts with FAM83D/CHICA (via C-terminus). Interacts with HMMR, SPAG5/Astrin and KNSTRN/Kinastrin. Interacts with TLK2 (By similarity). Interacts with NOS1 (PubMed:8864115). Interacts with WWC1, WWC2 and WWC3. Interacts with MRE11; inhibiting MRE11 homodimerization and activity (By similarity).</text>
</comment>
<comment type="subunit">
    <text evidence="4">(Microbial infection) Interacts with rabies virus phosphoprotein.</text>
</comment>
<comment type="subcellular location">
    <subcellularLocation>
        <location evidence="2">Cytoplasm</location>
        <location evidence="2">Cytoskeleton</location>
        <location evidence="2">Microtubule organizing center</location>
        <location evidence="2">Centrosome</location>
    </subcellularLocation>
    <subcellularLocation>
        <location evidence="2">Chromosome</location>
    </subcellularLocation>
    <subcellularLocation>
        <location evidence="8">Cytoplasm</location>
        <location evidence="8">Cytoskeleton</location>
    </subcellularLocation>
    <subcellularLocation>
        <location evidence="2">Nucleus</location>
    </subcellularLocation>
    <subcellularLocation>
        <location evidence="2">Mitochondrion</location>
    </subcellularLocation>
    <text evidence="2">Upon induction of apoptosis translocates together with BCL2L11 to mitochondria. Recruited to DNA double-strand breaks (DSBs) by TP53BP1 when phosphorylated at Ser-88.</text>
</comment>
<comment type="tissue specificity">
    <text>Weaker expression in the cerebellum and spinal cord compared with other brain regions.</text>
</comment>
<comment type="PTM">
    <text evidence="2">Phosphorylation at Ser-88 promotes recruitment to DNA double-strand breaks (DSBs) by TP53BP1 and ability to inhibit MRE11.</text>
</comment>
<comment type="similarity">
    <text evidence="10">Belongs to the dynein light chain family.</text>
</comment>
<name>DYL1_RAT</name>
<sequence>MCDRKAVIKNADMSEEMQQDSVECATQALEKYNIEKDIAAHIKKEFDKKYNPTWHCIVGRNFGSYVTHETKHFIYFYLGQVAILLFKSG</sequence>
<dbReference type="EMBL" id="U66461">
    <property type="protein sequence ID" value="AAB38257.1"/>
    <property type="molecule type" value="mRNA"/>
</dbReference>
<dbReference type="EMBL" id="BC063183">
    <property type="protein sequence ID" value="AAH63183.1"/>
    <property type="molecule type" value="mRNA"/>
</dbReference>
<dbReference type="PIR" id="JC5633">
    <property type="entry name" value="JC5633"/>
</dbReference>
<dbReference type="RefSeq" id="NP_445771.1">
    <property type="nucleotide sequence ID" value="NM_053319.5"/>
</dbReference>
<dbReference type="PDB" id="1F3C">
    <property type="method" value="NMR"/>
    <property type="chains" value="A/B=1-89"/>
</dbReference>
<dbReference type="PDB" id="1F95">
    <property type="method" value="NMR"/>
    <property type="chains" value="A/B=1-89"/>
</dbReference>
<dbReference type="PDB" id="1F96">
    <property type="method" value="NMR"/>
    <property type="chains" value="A/B=1-89"/>
</dbReference>
<dbReference type="PDBsum" id="1F3C"/>
<dbReference type="PDBsum" id="1F95"/>
<dbReference type="PDBsum" id="1F96"/>
<dbReference type="SMR" id="P63170"/>
<dbReference type="BioGRID" id="248680">
    <property type="interactions" value="4"/>
</dbReference>
<dbReference type="CORUM" id="P63170"/>
<dbReference type="FunCoup" id="P63170">
    <property type="interactions" value="2426"/>
</dbReference>
<dbReference type="IntAct" id="P63170">
    <property type="interactions" value="36"/>
</dbReference>
<dbReference type="MINT" id="P63170"/>
<dbReference type="STRING" id="10116.ENSRNOP00000061342"/>
<dbReference type="iPTMnet" id="P63170"/>
<dbReference type="PhosphoSitePlus" id="P63170"/>
<dbReference type="jPOST" id="P63170"/>
<dbReference type="PaxDb" id="10116-ENSRNOP00000061342"/>
<dbReference type="Ensembl" id="ENSRNOT00000014910.6">
    <property type="protein sequence ID" value="ENSRNOP00000061342.1"/>
    <property type="gene ID" value="ENSRNOG00000011222.6"/>
</dbReference>
<dbReference type="GeneID" id="58945"/>
<dbReference type="KEGG" id="rno:58945"/>
<dbReference type="UCSC" id="RGD:619866">
    <property type="organism name" value="rat"/>
</dbReference>
<dbReference type="AGR" id="RGD:619866"/>
<dbReference type="CTD" id="8655"/>
<dbReference type="RGD" id="619866">
    <property type="gene designation" value="Dynll1"/>
</dbReference>
<dbReference type="eggNOG" id="KOG3430">
    <property type="taxonomic scope" value="Eukaryota"/>
</dbReference>
<dbReference type="GeneTree" id="ENSGT00390000000378"/>
<dbReference type="HOGENOM" id="CLU_070944_4_0_1"/>
<dbReference type="InParanoid" id="P63170"/>
<dbReference type="OMA" id="THEKHCF"/>
<dbReference type="OrthoDB" id="10033309at2759"/>
<dbReference type="PhylomeDB" id="P63170"/>
<dbReference type="TreeFam" id="TF300264"/>
<dbReference type="Reactome" id="R-RNO-111446">
    <property type="pathway name" value="Activation of BIM and translocation to mitochondria"/>
</dbReference>
<dbReference type="Reactome" id="R-RNO-141444">
    <property type="pathway name" value="Amplification of signal from unattached kinetochores via a MAD2 inhibitory signal"/>
</dbReference>
<dbReference type="Reactome" id="R-RNO-1632852">
    <property type="pathway name" value="Macroautophagy"/>
</dbReference>
<dbReference type="Reactome" id="R-RNO-2132295">
    <property type="pathway name" value="MHC class II antigen presentation"/>
</dbReference>
<dbReference type="Reactome" id="R-RNO-2467813">
    <property type="pathway name" value="Separation of Sister Chromatids"/>
</dbReference>
<dbReference type="Reactome" id="R-RNO-2500257">
    <property type="pathway name" value="Resolution of Sister Chromatid Cohesion"/>
</dbReference>
<dbReference type="Reactome" id="R-RNO-2565942">
    <property type="pathway name" value="Regulation of PLK1 Activity at G2/M Transition"/>
</dbReference>
<dbReference type="Reactome" id="R-RNO-3371497">
    <property type="pathway name" value="HSP90 chaperone cycle for steroid hormone receptors (SHR) in the presence of ligand"/>
</dbReference>
<dbReference type="Reactome" id="R-RNO-380259">
    <property type="pathway name" value="Loss of Nlp from mitotic centrosomes"/>
</dbReference>
<dbReference type="Reactome" id="R-RNO-380270">
    <property type="pathway name" value="Recruitment of mitotic centrosome proteins and complexes"/>
</dbReference>
<dbReference type="Reactome" id="R-RNO-380284">
    <property type="pathway name" value="Loss of proteins required for interphase microtubule organization from the centrosome"/>
</dbReference>
<dbReference type="Reactome" id="R-RNO-380320">
    <property type="pathway name" value="Recruitment of NuMA to mitotic centrosomes"/>
</dbReference>
<dbReference type="Reactome" id="R-RNO-5620912">
    <property type="pathway name" value="Anchoring of the basal body to the plasma membrane"/>
</dbReference>
<dbReference type="Reactome" id="R-RNO-5620924">
    <property type="pathway name" value="Intraflagellar transport"/>
</dbReference>
<dbReference type="Reactome" id="R-RNO-5663220">
    <property type="pathway name" value="RHO GTPases Activate Formins"/>
</dbReference>
<dbReference type="Reactome" id="R-RNO-6798695">
    <property type="pathway name" value="Neutrophil degranulation"/>
</dbReference>
<dbReference type="Reactome" id="R-RNO-6807878">
    <property type="pathway name" value="COPI-mediated anterograde transport"/>
</dbReference>
<dbReference type="Reactome" id="R-RNO-6811436">
    <property type="pathway name" value="COPI-independent Golgi-to-ER retrograde traffic"/>
</dbReference>
<dbReference type="Reactome" id="R-RNO-68877">
    <property type="pathway name" value="Mitotic Prometaphase"/>
</dbReference>
<dbReference type="Reactome" id="R-RNO-8854518">
    <property type="pathway name" value="AURKA Activation by TPX2"/>
</dbReference>
<dbReference type="Reactome" id="R-RNO-9646399">
    <property type="pathway name" value="Aggrephagy"/>
</dbReference>
<dbReference type="Reactome" id="R-RNO-9648025">
    <property type="pathway name" value="EML4 and NUDC in mitotic spindle formation"/>
</dbReference>
<dbReference type="EvolutionaryTrace" id="P63170"/>
<dbReference type="PRO" id="PR:P63170"/>
<dbReference type="Proteomes" id="UP000002494">
    <property type="component" value="Chromosome 12"/>
</dbReference>
<dbReference type="Bgee" id="ENSRNOG00000011222">
    <property type="expression patterns" value="Expressed in frontal cortex and 19 other cell types or tissues"/>
</dbReference>
<dbReference type="GO" id="GO:1904115">
    <property type="term" value="C:axon cytoplasm"/>
    <property type="evidence" value="ECO:0000314"/>
    <property type="project" value="RGD"/>
</dbReference>
<dbReference type="GO" id="GO:0005813">
    <property type="term" value="C:centrosome"/>
    <property type="evidence" value="ECO:0000266"/>
    <property type="project" value="RGD"/>
</dbReference>
<dbReference type="GO" id="GO:0005929">
    <property type="term" value="C:cilium"/>
    <property type="evidence" value="ECO:0007669"/>
    <property type="project" value="GOC"/>
</dbReference>
<dbReference type="GO" id="GO:0008180">
    <property type="term" value="C:COP9 signalosome"/>
    <property type="evidence" value="ECO:0000266"/>
    <property type="project" value="RGD"/>
</dbReference>
<dbReference type="GO" id="GO:0005737">
    <property type="term" value="C:cytoplasm"/>
    <property type="evidence" value="ECO:0000266"/>
    <property type="project" value="RGD"/>
</dbReference>
<dbReference type="GO" id="GO:0005868">
    <property type="term" value="C:cytoplasmic dynein complex"/>
    <property type="evidence" value="ECO:0000314"/>
    <property type="project" value="UniProtKB"/>
</dbReference>
<dbReference type="GO" id="GO:0005856">
    <property type="term" value="C:cytoskeleton"/>
    <property type="evidence" value="ECO:0000266"/>
    <property type="project" value="RGD"/>
</dbReference>
<dbReference type="GO" id="GO:0005829">
    <property type="term" value="C:cytosol"/>
    <property type="evidence" value="ECO:0000266"/>
    <property type="project" value="RGD"/>
</dbReference>
<dbReference type="GO" id="GO:0030286">
    <property type="term" value="C:dynein complex"/>
    <property type="evidence" value="ECO:0000266"/>
    <property type="project" value="RGD"/>
</dbReference>
<dbReference type="GO" id="GO:0000776">
    <property type="term" value="C:kinetochore"/>
    <property type="evidence" value="ECO:0000250"/>
    <property type="project" value="UniProtKB"/>
</dbReference>
<dbReference type="GO" id="GO:0016020">
    <property type="term" value="C:membrane"/>
    <property type="evidence" value="ECO:0000266"/>
    <property type="project" value="RGD"/>
</dbReference>
<dbReference type="GO" id="GO:0005874">
    <property type="term" value="C:microtubule"/>
    <property type="evidence" value="ECO:0007669"/>
    <property type="project" value="UniProtKB-KW"/>
</dbReference>
<dbReference type="GO" id="GO:0005739">
    <property type="term" value="C:mitochondrion"/>
    <property type="evidence" value="ECO:0007669"/>
    <property type="project" value="UniProtKB-SubCell"/>
</dbReference>
<dbReference type="GO" id="GO:0072686">
    <property type="term" value="C:mitotic spindle"/>
    <property type="evidence" value="ECO:0000250"/>
    <property type="project" value="UniProtKB"/>
</dbReference>
<dbReference type="GO" id="GO:0005634">
    <property type="term" value="C:nucleus"/>
    <property type="evidence" value="ECO:0000266"/>
    <property type="project" value="RGD"/>
</dbReference>
<dbReference type="GO" id="GO:0030141">
    <property type="term" value="C:secretory granule"/>
    <property type="evidence" value="ECO:0000314"/>
    <property type="project" value="RGD"/>
</dbReference>
<dbReference type="GO" id="GO:0035861">
    <property type="term" value="C:site of double-strand break"/>
    <property type="evidence" value="ECO:0000250"/>
    <property type="project" value="UniProtKB"/>
</dbReference>
<dbReference type="GO" id="GO:0060703">
    <property type="term" value="F:deoxyribonuclease inhibitor activity"/>
    <property type="evidence" value="ECO:0000266"/>
    <property type="project" value="RGD"/>
</dbReference>
<dbReference type="GO" id="GO:0045505">
    <property type="term" value="F:dynein intermediate chain binding"/>
    <property type="evidence" value="ECO:0000266"/>
    <property type="project" value="RGD"/>
</dbReference>
<dbReference type="GO" id="GO:0019899">
    <property type="term" value="F:enzyme binding"/>
    <property type="evidence" value="ECO:0000353"/>
    <property type="project" value="RGD"/>
</dbReference>
<dbReference type="GO" id="GO:0004857">
    <property type="term" value="F:enzyme inhibitor activity"/>
    <property type="evidence" value="ECO:0000314"/>
    <property type="project" value="MGI"/>
</dbReference>
<dbReference type="GO" id="GO:0042802">
    <property type="term" value="F:identical protein binding"/>
    <property type="evidence" value="ECO:0000353"/>
    <property type="project" value="RGD"/>
</dbReference>
<dbReference type="GO" id="GO:0036487">
    <property type="term" value="F:nitric-oxide synthase inhibitor activity"/>
    <property type="evidence" value="ECO:0000314"/>
    <property type="project" value="UniProtKB"/>
</dbReference>
<dbReference type="GO" id="GO:0030235">
    <property type="term" value="F:nitric-oxide synthase regulator activity"/>
    <property type="evidence" value="ECO:0000314"/>
    <property type="project" value="RGD"/>
</dbReference>
<dbReference type="GO" id="GO:0019904">
    <property type="term" value="F:protein domain specific binding"/>
    <property type="evidence" value="ECO:0000266"/>
    <property type="project" value="RGD"/>
</dbReference>
<dbReference type="GO" id="GO:0044877">
    <property type="term" value="F:protein-containing complex binding"/>
    <property type="evidence" value="ECO:0000314"/>
    <property type="project" value="RGD"/>
</dbReference>
<dbReference type="GO" id="GO:0097110">
    <property type="term" value="F:scaffold protein binding"/>
    <property type="evidence" value="ECO:0000353"/>
    <property type="project" value="RGD"/>
</dbReference>
<dbReference type="GO" id="GO:0006915">
    <property type="term" value="P:apoptotic process"/>
    <property type="evidence" value="ECO:0007669"/>
    <property type="project" value="UniProtKB-KW"/>
</dbReference>
<dbReference type="GO" id="GO:0006974">
    <property type="term" value="P:DNA damage response"/>
    <property type="evidence" value="ECO:0007669"/>
    <property type="project" value="UniProtKB-KW"/>
</dbReference>
<dbReference type="GO" id="GO:0035721">
    <property type="term" value="P:intraciliary retrograde transport"/>
    <property type="evidence" value="ECO:0000266"/>
    <property type="project" value="RGD"/>
</dbReference>
<dbReference type="GO" id="GO:0160040">
    <property type="term" value="P:mitocytosis"/>
    <property type="evidence" value="ECO:0000266"/>
    <property type="project" value="RGD"/>
</dbReference>
<dbReference type="GO" id="GO:0044458">
    <property type="term" value="P:motile cilium assembly"/>
    <property type="evidence" value="ECO:0000266"/>
    <property type="project" value="RGD"/>
</dbReference>
<dbReference type="GO" id="GO:0110027">
    <property type="term" value="P:negative regulation of DNA strand resection involved in replication fork processing"/>
    <property type="evidence" value="ECO:0000250"/>
    <property type="project" value="UniProtKB"/>
</dbReference>
<dbReference type="GO" id="GO:0045019">
    <property type="term" value="P:negative regulation of nitric oxide biosynthetic process"/>
    <property type="evidence" value="ECO:0000314"/>
    <property type="project" value="UniProtKB"/>
</dbReference>
<dbReference type="GO" id="GO:0035774">
    <property type="term" value="P:positive regulation of insulin secretion involved in cellular response to glucose stimulus"/>
    <property type="evidence" value="ECO:0000314"/>
    <property type="project" value="RGD"/>
</dbReference>
<dbReference type="GO" id="GO:1902857">
    <property type="term" value="P:positive regulation of non-motile cilium assembly"/>
    <property type="evidence" value="ECO:0000266"/>
    <property type="project" value="RGD"/>
</dbReference>
<dbReference type="GO" id="GO:0051881">
    <property type="term" value="P:regulation of mitochondrial membrane potential"/>
    <property type="evidence" value="ECO:0000266"/>
    <property type="project" value="RGD"/>
</dbReference>
<dbReference type="GO" id="GO:0007286">
    <property type="term" value="P:spermatid development"/>
    <property type="evidence" value="ECO:0000270"/>
    <property type="project" value="RGD"/>
</dbReference>
<dbReference type="CDD" id="cd21452">
    <property type="entry name" value="DLC-like_DYNLL1_DYNLL2"/>
    <property type="match status" value="1"/>
</dbReference>
<dbReference type="FunFam" id="3.30.740.10:FF:000001">
    <property type="entry name" value="Dynein light chain"/>
    <property type="match status" value="1"/>
</dbReference>
<dbReference type="Gene3D" id="3.30.740.10">
    <property type="entry name" value="Protein Inhibitor Of Neuronal Nitric Oxide Synthase"/>
    <property type="match status" value="1"/>
</dbReference>
<dbReference type="IDEAL" id="IID50322"/>
<dbReference type="InterPro" id="IPR037177">
    <property type="entry name" value="DLC_sf"/>
</dbReference>
<dbReference type="InterPro" id="IPR019763">
    <property type="entry name" value="Dynein_light_1/2_CS"/>
</dbReference>
<dbReference type="InterPro" id="IPR001372">
    <property type="entry name" value="Dynein_light_chain_typ-1/2"/>
</dbReference>
<dbReference type="PANTHER" id="PTHR11886">
    <property type="entry name" value="DYNEIN LIGHT CHAIN"/>
    <property type="match status" value="1"/>
</dbReference>
<dbReference type="PANTHER" id="PTHR11886:SF91">
    <property type="entry name" value="DYNEIN LIGHT CHAIN 1, CYTOPLASMIC"/>
    <property type="match status" value="1"/>
</dbReference>
<dbReference type="Pfam" id="PF01221">
    <property type="entry name" value="Dynein_light"/>
    <property type="match status" value="1"/>
</dbReference>
<dbReference type="SMART" id="SM01375">
    <property type="entry name" value="Dynein_light"/>
    <property type="match status" value="1"/>
</dbReference>
<dbReference type="SUPFAM" id="SSF54648">
    <property type="entry name" value="DLC"/>
    <property type="match status" value="1"/>
</dbReference>
<dbReference type="PROSITE" id="PS01239">
    <property type="entry name" value="DYNEIN_LIGHT_1"/>
    <property type="match status" value="1"/>
</dbReference>
<accession>P63170</accession>
<accession>Q15701</accession>
<reference key="1">
    <citation type="journal article" date="1996" name="Science">
        <title>PIN: an associated protein inhibitor of neuronal nitric oxide synthase.</title>
        <authorList>
            <person name="Jaffrey S.R."/>
            <person name="Snyder S.H."/>
        </authorList>
    </citation>
    <scope>NUCLEOTIDE SEQUENCE [MRNA]</scope>
    <scope>FUNCTION</scope>
    <scope>INTERACTION WITH NOS1</scope>
</reference>
<reference key="2">
    <citation type="journal article" date="1997" name="Biochem. Biophys. Res. Commun.">
        <title>Distribution of protein inhibitor of neuronal nitric oxide synthase in rat brain.</title>
        <authorList>
            <person name="Greenwood M.T."/>
            <person name="Guo Y."/>
            <person name="Kumar U."/>
            <person name="Beausejours S."/>
            <person name="Hussain S.N.A."/>
        </authorList>
    </citation>
    <scope>NUCLEOTIDE SEQUENCE [MRNA]</scope>
</reference>
<reference key="3">
    <citation type="journal article" date="2004" name="Genome Res.">
        <title>The status, quality, and expansion of the NIH full-length cDNA project: the Mammalian Gene Collection (MGC).</title>
        <authorList>
            <consortium name="The MGC Project Team"/>
        </authorList>
    </citation>
    <scope>NUCLEOTIDE SEQUENCE [LARGE SCALE MRNA]</scope>
    <source>
        <tissue>Pituitary</tissue>
    </source>
</reference>
<reference key="4">
    <citation type="submission" date="2006-11" db="UniProtKB">
        <authorList>
            <person name="Lubec G."/>
            <person name="Afjehi-Sadat L."/>
        </authorList>
    </citation>
    <scope>PROTEIN SEQUENCE OF 50-60</scope>
    <scope>IDENTIFICATION BY MASS SPECTROMETRY</scope>
    <source>
        <strain>Sprague-Dawley</strain>
        <tissue>Spinal cord</tissue>
    </source>
</reference>
<reference key="5">
    <citation type="journal article" date="1996" name="J. Biol. Chem.">
        <title>Brain cytoplasmic and flagellar outer arm dyneins share a highly conserved Mr 8,000 light chain.</title>
        <authorList>
            <person name="King S.M."/>
            <person name="Barbarese E."/>
            <person name="Dillman J.F. III"/>
            <person name="Patel-King R.S."/>
            <person name="Carson J.H."/>
            <person name="Pfister K.K."/>
        </authorList>
    </citation>
    <scope>FUNCTION</scope>
    <scope>IDENTIFICATION IN THE CYTOPLASMIC DYNEIN 1 COMPLEX</scope>
    <scope>SUBCELLULAR LOCATION</scope>
</reference>
<reference key="6">
    <citation type="journal article" date="2001" name="Cell Motil. Cytoskeleton">
        <title>Light chains of mammalian cytoplasmic dynein: identification and characterization of a family of LC8 light chains.</title>
        <authorList>
            <person name="Wilson M.J."/>
            <person name="Salata M.W."/>
            <person name="Susalka S.J."/>
            <person name="Pfister K.K."/>
        </authorList>
    </citation>
    <scope>FUNCTION</scope>
    <scope>IDENTIFICATION IN THE CYTOPLASMIC DYNEIN 1 COMPLEX</scope>
</reference>
<reference key="7">
    <citation type="journal article" date="2001" name="J. Gen. Virol.">
        <title>Molecular basis for the interaction between rabies virus phosphoprotein P and the dynein light chain LC8: dissociation of dynein-binding properties and transcriptional functionality of P.</title>
        <authorList>
            <person name="Poisson N."/>
            <person name="Real E."/>
            <person name="Gaudin Y."/>
            <person name="Vaney M.C."/>
            <person name="King S."/>
            <person name="Jacob Y."/>
            <person name="Tordo N."/>
            <person name="Blondel D."/>
        </authorList>
    </citation>
    <scope>INTERACTION WITH RABIES VIRUS PHOSPHOPROTEIN (MICROBIAL INFECTION)</scope>
</reference>
<reference key="8">
    <citation type="journal article" date="2005" name="Cell. Mol. Neurobiol.">
        <title>Subcellular localization of PMES-2 proteins regulated by their two cytoskeleton-associated domains.</title>
        <authorList>
            <person name="Ninomiya K."/>
            <person name="Ishimoto T."/>
            <person name="Taguchi T."/>
        </authorList>
    </citation>
    <scope>INTERACTION WITH BCAS1</scope>
    <source>
        <tissue>Brain</tissue>
    </source>
</reference>
<reference key="9">
    <citation type="journal article" date="2011" name="J. Biol. Chem.">
        <title>Identification of a novel Bcl-2-interacting mediator of cell death (Bim) E3 ligase, tripartite motif-containing protein 2 (TRIM2), and its role in rapid ischemic tolerance-induced neuroprotection.</title>
        <authorList>
            <person name="Thompson S."/>
            <person name="Pearson A.N."/>
            <person name="Ashley M.D."/>
            <person name="Jessick V."/>
            <person name="Murphy B.M."/>
            <person name="Gafken P."/>
            <person name="Henshall D.C."/>
            <person name="Morris K.T."/>
            <person name="Simon R.P."/>
            <person name="Meller R."/>
        </authorList>
    </citation>
    <scope>INTERACTION WITH BCL2L11</scope>
</reference>
<reference key="10">
    <citation type="journal article" date="2001" name="J. Mol. Biol.">
        <title>Structural basis of diverse sequence-dependent target recognition by the 8 kDa dynein light chain.</title>
        <authorList>
            <person name="Fan J.-S."/>
            <person name="Zhang Q."/>
            <person name="Tochio H."/>
            <person name="Li M."/>
            <person name="Zhang M."/>
        </authorList>
    </citation>
    <scope>STRUCTURE BY NMR</scope>
</reference>
<proteinExistence type="evidence at protein level"/>
<feature type="chain" id="PRO_0000195129" description="Dynein light chain 1, cytoplasmic">
    <location>
        <begin position="1"/>
        <end position="89"/>
    </location>
</feature>
<feature type="region of interest" description="Interaction with ESR1" evidence="1">
    <location>
        <begin position="67"/>
        <end position="89"/>
    </location>
</feature>
<feature type="modified residue" description="N6-acetyllysine" evidence="2">
    <location>
        <position position="36"/>
    </location>
</feature>
<feature type="modified residue" description="Phosphoserine" evidence="2">
    <location>
        <position position="88"/>
    </location>
</feature>
<feature type="cross-link" description="Glycyl lysine isopeptide (Lys-Gly) (interchain with G-Cter in SUMO2)" evidence="2">
    <location>
        <position position="43"/>
    </location>
</feature>
<feature type="strand" evidence="11">
    <location>
        <begin position="9"/>
        <end position="11"/>
    </location>
</feature>
<feature type="helix" evidence="11">
    <location>
        <begin position="15"/>
        <end position="31"/>
    </location>
</feature>
<feature type="helix" evidence="11">
    <location>
        <begin position="35"/>
        <end position="49"/>
    </location>
</feature>
<feature type="strand" evidence="11">
    <location>
        <begin position="54"/>
        <end position="61"/>
    </location>
</feature>
<feature type="strand" evidence="11">
    <location>
        <begin position="63"/>
        <end position="65"/>
    </location>
</feature>
<feature type="strand" evidence="11">
    <location>
        <begin position="73"/>
        <end position="76"/>
    </location>
</feature>
<feature type="strand" evidence="11">
    <location>
        <begin position="82"/>
        <end position="87"/>
    </location>
</feature>
<organism>
    <name type="scientific">Rattus norvegicus</name>
    <name type="common">Rat</name>
    <dbReference type="NCBI Taxonomy" id="10116"/>
    <lineage>
        <taxon>Eukaryota</taxon>
        <taxon>Metazoa</taxon>
        <taxon>Chordata</taxon>
        <taxon>Craniata</taxon>
        <taxon>Vertebrata</taxon>
        <taxon>Euteleostomi</taxon>
        <taxon>Mammalia</taxon>
        <taxon>Eutheria</taxon>
        <taxon>Euarchontoglires</taxon>
        <taxon>Glires</taxon>
        <taxon>Rodentia</taxon>
        <taxon>Myomorpha</taxon>
        <taxon>Muroidea</taxon>
        <taxon>Muridae</taxon>
        <taxon>Murinae</taxon>
        <taxon>Rattus</taxon>
    </lineage>
</organism>